<reference key="1">
    <citation type="journal article" date="2011" name="MBio">
        <title>Novel metabolic attributes of the genus Cyanothece, comprising a group of unicellular nitrogen-fixing Cyanobacteria.</title>
        <authorList>
            <person name="Bandyopadhyay A."/>
            <person name="Elvitigala T."/>
            <person name="Welsh E."/>
            <person name="Stockel J."/>
            <person name="Liberton M."/>
            <person name="Min H."/>
            <person name="Sherman L.A."/>
            <person name="Pakrasi H.B."/>
        </authorList>
    </citation>
    <scope>NUCLEOTIDE SEQUENCE [LARGE SCALE GENOMIC DNA]</scope>
    <source>
        <strain>PCC 8801 / RF-1</strain>
    </source>
</reference>
<gene>
    <name evidence="1" type="primary">psbT</name>
    <name type="ordered locus">PCC8801_3070</name>
</gene>
<dbReference type="EMBL" id="CP001287">
    <property type="protein sequence ID" value="ACK67051.1"/>
    <property type="molecule type" value="Genomic_DNA"/>
</dbReference>
<dbReference type="RefSeq" id="WP_012596312.1">
    <property type="nucleotide sequence ID" value="NC_011726.1"/>
</dbReference>
<dbReference type="SMR" id="B7JX63"/>
<dbReference type="STRING" id="41431.PCC8801_3070"/>
<dbReference type="KEGG" id="cyp:PCC8801_3070"/>
<dbReference type="eggNOG" id="ENOG5033APQ">
    <property type="taxonomic scope" value="Bacteria"/>
</dbReference>
<dbReference type="HOGENOM" id="CLU_217078_1_0_3"/>
<dbReference type="OrthoDB" id="427659at2"/>
<dbReference type="Proteomes" id="UP000008204">
    <property type="component" value="Chromosome"/>
</dbReference>
<dbReference type="GO" id="GO:0009539">
    <property type="term" value="C:photosystem II reaction center"/>
    <property type="evidence" value="ECO:0007669"/>
    <property type="project" value="InterPro"/>
</dbReference>
<dbReference type="GO" id="GO:0031676">
    <property type="term" value="C:plasma membrane-derived thylakoid membrane"/>
    <property type="evidence" value="ECO:0007669"/>
    <property type="project" value="UniProtKB-SubCell"/>
</dbReference>
<dbReference type="GO" id="GO:0015979">
    <property type="term" value="P:photosynthesis"/>
    <property type="evidence" value="ECO:0007669"/>
    <property type="project" value="UniProtKB-UniRule"/>
</dbReference>
<dbReference type="HAMAP" id="MF_00808">
    <property type="entry name" value="PSII_PsbT"/>
    <property type="match status" value="1"/>
</dbReference>
<dbReference type="InterPro" id="IPR001743">
    <property type="entry name" value="PSII_PsbT"/>
</dbReference>
<dbReference type="InterPro" id="IPR037268">
    <property type="entry name" value="PSII_PsbT_sf"/>
</dbReference>
<dbReference type="NCBIfam" id="NF008825">
    <property type="entry name" value="PRK11875.1"/>
    <property type="match status" value="1"/>
</dbReference>
<dbReference type="PANTHER" id="PTHR36411">
    <property type="match status" value="1"/>
</dbReference>
<dbReference type="PANTHER" id="PTHR36411:SF2">
    <property type="entry name" value="PHOTOSYSTEM II REACTION CENTER PROTEIN T"/>
    <property type="match status" value="1"/>
</dbReference>
<dbReference type="Pfam" id="PF01405">
    <property type="entry name" value="PsbT"/>
    <property type="match status" value="1"/>
</dbReference>
<dbReference type="SUPFAM" id="SSF161029">
    <property type="entry name" value="Photosystem II reaction center protein T, PsbT"/>
    <property type="match status" value="1"/>
</dbReference>
<evidence type="ECO:0000255" key="1">
    <source>
        <dbReference type="HAMAP-Rule" id="MF_00808"/>
    </source>
</evidence>
<name>PSBT_RIPO1</name>
<protein>
    <recommendedName>
        <fullName evidence="1">Photosystem II reaction center protein T</fullName>
        <shortName evidence="1">PSII-T</shortName>
    </recommendedName>
</protein>
<organism>
    <name type="scientific">Rippkaea orientalis (strain PCC 8801 / RF-1)</name>
    <name type="common">Cyanothece sp. (strain PCC 8801)</name>
    <dbReference type="NCBI Taxonomy" id="41431"/>
    <lineage>
        <taxon>Bacteria</taxon>
        <taxon>Bacillati</taxon>
        <taxon>Cyanobacteriota</taxon>
        <taxon>Cyanophyceae</taxon>
        <taxon>Oscillatoriophycideae</taxon>
        <taxon>Chroococcales</taxon>
        <taxon>Aphanothecaceae</taxon>
        <taxon>Rippkaea</taxon>
        <taxon>Rippkaea orientalis</taxon>
    </lineage>
</organism>
<comment type="function">
    <text evidence="1">Found at the monomer-monomer interface of the photosystem II (PS II) dimer, plays a role in assembly and dimerization of PSII. PSII is a light-driven water plastoquinone oxidoreductase, using light energy to abstract electrons from H(2)O, generating a proton gradient subsequently used for ATP formation.</text>
</comment>
<comment type="subunit">
    <text evidence="1">PSII is composed of 1 copy each of membrane proteins PsbA, PsbB, PsbC, PsbD, PsbE, PsbF, PsbH, PsbI, PsbJ, PsbK, PsbL, PsbM, PsbT, PsbX, PsbY, PsbZ, Psb30/Ycf12, peripheral proteins PsbO, CyanoQ (PsbQ), PsbU, PsbV and a large number of cofactors. It forms dimeric complexes.</text>
</comment>
<comment type="subcellular location">
    <subcellularLocation>
        <location evidence="1">Cellular thylakoid membrane</location>
        <topology evidence="1">Single-pass membrane protein</topology>
    </subcellularLocation>
</comment>
<comment type="similarity">
    <text evidence="1">Belongs to the PsbT family.</text>
</comment>
<sequence length="31" mass="3569">MESVAYILVLTMTLAVLFFAIAFREPPRIQK</sequence>
<keyword id="KW-0472">Membrane</keyword>
<keyword id="KW-0602">Photosynthesis</keyword>
<keyword id="KW-0604">Photosystem II</keyword>
<keyword id="KW-1185">Reference proteome</keyword>
<keyword id="KW-0793">Thylakoid</keyword>
<keyword id="KW-0812">Transmembrane</keyword>
<keyword id="KW-1133">Transmembrane helix</keyword>
<accession>B7JX63</accession>
<feature type="chain" id="PRO_1000134015" description="Photosystem II reaction center protein T">
    <location>
        <begin position="1"/>
        <end position="31"/>
    </location>
</feature>
<feature type="transmembrane region" description="Helical" evidence="1">
    <location>
        <begin position="3"/>
        <end position="23"/>
    </location>
</feature>
<proteinExistence type="inferred from homology"/>